<feature type="chain" id="PRO_0000114899" description="Large proline-rich protein BAG6">
    <location>
        <begin position="1"/>
        <end position="1146"/>
    </location>
</feature>
<feature type="domain" description="Ubiquitin-like" evidence="3">
    <location>
        <begin position="17"/>
        <end position="92"/>
    </location>
</feature>
<feature type="repeat" description="1" evidence="1">
    <location>
        <begin position="236"/>
        <end position="265"/>
    </location>
</feature>
<feature type="repeat" description="2" evidence="1">
    <location>
        <begin position="410"/>
        <end position="438"/>
    </location>
</feature>
<feature type="repeat" description="3" evidence="1">
    <location>
        <begin position="589"/>
        <end position="616"/>
    </location>
</feature>
<feature type="repeat" description="4" evidence="1">
    <location>
        <begin position="622"/>
        <end position="650"/>
    </location>
</feature>
<feature type="region of interest" description="Disordered" evidence="4">
    <location>
        <begin position="87"/>
        <end position="128"/>
    </location>
</feature>
<feature type="region of interest" description="Disordered" evidence="4">
    <location>
        <begin position="186"/>
        <end position="268"/>
    </location>
</feature>
<feature type="region of interest" description="4 X 29 AA approximate repeats" evidence="1">
    <location>
        <begin position="236"/>
        <end position="650"/>
    </location>
</feature>
<feature type="region of interest" description="Disordered" evidence="4">
    <location>
        <begin position="381"/>
        <end position="436"/>
    </location>
</feature>
<feature type="region of interest" description="Disordered" evidence="4">
    <location>
        <begin position="457"/>
        <end position="525"/>
    </location>
</feature>
<feature type="region of interest" description="Disordered" evidence="4">
    <location>
        <begin position="555"/>
        <end position="618"/>
    </location>
</feature>
<feature type="region of interest" description="Disordered" evidence="4">
    <location>
        <begin position="666"/>
        <end position="711"/>
    </location>
</feature>
<feature type="region of interest" description="Disordered" evidence="4">
    <location>
        <begin position="961"/>
        <end position="1146"/>
    </location>
</feature>
<feature type="region of interest" description="Required for interaction with GET4" evidence="1">
    <location>
        <begin position="1024"/>
        <end position="1054"/>
    </location>
</feature>
<feature type="region of interest" description="Sufficient for the delivery of client proteins to the endoplasmic reticulum" evidence="1">
    <location>
        <begin position="1036"/>
        <end position="1146"/>
    </location>
</feature>
<feature type="region of interest" description="BAG-similar domain, required and sufficient for interaction with UBL4A" evidence="1">
    <location>
        <begin position="1072"/>
        <end position="1129"/>
    </location>
</feature>
<feature type="short sequence motif" description="Nuclear localization site" evidence="1">
    <location>
        <begin position="1026"/>
        <end position="1068"/>
    </location>
</feature>
<feature type="compositionally biased region" description="Low complexity" evidence="4">
    <location>
        <begin position="96"/>
        <end position="108"/>
    </location>
</feature>
<feature type="compositionally biased region" description="Gly residues" evidence="4">
    <location>
        <begin position="109"/>
        <end position="122"/>
    </location>
</feature>
<feature type="compositionally biased region" description="Polar residues" evidence="4">
    <location>
        <begin position="208"/>
        <end position="217"/>
    </location>
</feature>
<feature type="compositionally biased region" description="Pro residues" evidence="4">
    <location>
        <begin position="239"/>
        <end position="257"/>
    </location>
</feature>
<feature type="compositionally biased region" description="Low complexity" evidence="4">
    <location>
        <begin position="394"/>
        <end position="413"/>
    </location>
</feature>
<feature type="compositionally biased region" description="Pro residues" evidence="4">
    <location>
        <begin position="422"/>
        <end position="433"/>
    </location>
</feature>
<feature type="compositionally biased region" description="Pro residues" evidence="4">
    <location>
        <begin position="502"/>
        <end position="515"/>
    </location>
</feature>
<feature type="compositionally biased region" description="Low complexity" evidence="4">
    <location>
        <begin position="555"/>
        <end position="573"/>
    </location>
</feature>
<feature type="compositionally biased region" description="Low complexity" evidence="4">
    <location>
        <begin position="583"/>
        <end position="601"/>
    </location>
</feature>
<feature type="compositionally biased region" description="Pro residues" evidence="4">
    <location>
        <begin position="603"/>
        <end position="614"/>
    </location>
</feature>
<feature type="compositionally biased region" description="Pro residues" evidence="4">
    <location>
        <begin position="670"/>
        <end position="694"/>
    </location>
</feature>
<feature type="compositionally biased region" description="Basic and acidic residues" evidence="4">
    <location>
        <begin position="977"/>
        <end position="986"/>
    </location>
</feature>
<feature type="compositionally biased region" description="Low complexity" evidence="4">
    <location>
        <begin position="1021"/>
        <end position="1034"/>
    </location>
</feature>
<feature type="compositionally biased region" description="Low complexity" evidence="4">
    <location>
        <begin position="1080"/>
        <end position="1090"/>
    </location>
</feature>
<feature type="site" description="Cleavage; by CASP3" evidence="1">
    <location>
        <begin position="1015"/>
        <end position="1016"/>
    </location>
</feature>
<feature type="modified residue" description="N-acetylmethionine" evidence="1">
    <location>
        <position position="1"/>
    </location>
</feature>
<feature type="modified residue" description="Phosphoserine" evidence="1">
    <location>
        <position position="96"/>
    </location>
</feature>
<feature type="modified residue" description="Phosphothreonine" evidence="1">
    <location>
        <position position="117"/>
    </location>
</feature>
<feature type="modified residue" description="Phosphoserine" evidence="1">
    <location>
        <position position="978"/>
    </location>
</feature>
<feature type="modified residue" description="Phosphoserine" evidence="8">
    <location>
        <position position="987"/>
    </location>
</feature>
<feature type="modified residue" description="Phosphothreonine" evidence="1">
    <location>
        <position position="1067"/>
    </location>
</feature>
<feature type="modified residue" description="Phosphoserine" evidence="8">
    <location>
        <position position="1095"/>
    </location>
</feature>
<feature type="modified residue" description="Phosphoserine" evidence="1">
    <location>
        <position position="1131"/>
    </location>
</feature>
<feature type="splice variant" id="VSP_040420" description="In isoform 2." evidence="5">
    <location>
        <position position="522"/>
    </location>
</feature>
<feature type="splice variant" id="VSP_040421" description="In isoform 2." evidence="5">
    <location>
        <begin position="1067"/>
        <end position="1115"/>
    </location>
</feature>
<feature type="sequence conflict" description="In Ref. 1; BAA76607." evidence="6" ref="1">
    <original>S</original>
    <variation>N</variation>
    <location>
        <position position="4"/>
    </location>
</feature>
<feature type="sequence conflict" description="In Ref. 1; BAA76607." evidence="6" ref="1">
    <original>M</original>
    <variation>V</variation>
    <location>
        <position position="11"/>
    </location>
</feature>
<feature type="sequence conflict" description="In Ref. 1; BAA76607." evidence="6" ref="1">
    <original>A</original>
    <variation>R</variation>
    <location>
        <position position="47"/>
    </location>
</feature>
<feature type="sequence conflict" description="In Ref. 1; BAA76607." evidence="6" ref="1">
    <original>D</original>
    <variation>E</variation>
    <location>
        <position position="74"/>
    </location>
</feature>
<feature type="sequence conflict" description="In Ref. 1; BAA76607." evidence="6" ref="1">
    <original>Q</original>
    <variation>H</variation>
    <location>
        <position position="93"/>
    </location>
</feature>
<feature type="sequence conflict" description="In Ref. 1; BAA76607." evidence="6" ref="1">
    <original>L</original>
    <variation>C</variation>
    <location>
        <position position="114"/>
    </location>
</feature>
<feature type="sequence conflict" description="In Ref. 1; BAA76607." evidence="6" ref="1">
    <original>T</original>
    <variation>N</variation>
    <location>
        <position position="189"/>
    </location>
</feature>
<feature type="sequence conflict" description="In Ref. 1; BAA76607." evidence="6" ref="1">
    <original>NH</original>
    <variation>TQ</variation>
    <location>
        <begin position="264"/>
        <end position="265"/>
    </location>
</feature>
<feature type="sequence conflict" description="In Ref. 1; BAA76607." evidence="6" ref="1">
    <original>T</original>
    <variation>TAQ</variation>
    <location>
        <position position="567"/>
    </location>
</feature>
<name>BAG6_RAT</name>
<organism>
    <name type="scientific">Rattus norvegicus</name>
    <name type="common">Rat</name>
    <dbReference type="NCBI Taxonomy" id="10116"/>
    <lineage>
        <taxon>Eukaryota</taxon>
        <taxon>Metazoa</taxon>
        <taxon>Chordata</taxon>
        <taxon>Craniata</taxon>
        <taxon>Vertebrata</taxon>
        <taxon>Euteleostomi</taxon>
        <taxon>Mammalia</taxon>
        <taxon>Eutheria</taxon>
        <taxon>Euarchontoglires</taxon>
        <taxon>Glires</taxon>
        <taxon>Rodentia</taxon>
        <taxon>Myomorpha</taxon>
        <taxon>Muroidea</taxon>
        <taxon>Muridae</taxon>
        <taxon>Murinae</taxon>
        <taxon>Rattus</taxon>
    </lineage>
</organism>
<proteinExistence type="evidence at protein level"/>
<protein>
    <recommendedName>
        <fullName evidence="6">Large proline-rich protein BAG6</fullName>
    </recommendedName>
    <alternativeName>
        <fullName evidence="7">BCL2-associated athanogene 6</fullName>
    </alternativeName>
    <alternativeName>
        <fullName evidence="5">HLA-B-associated transcript 3</fullName>
    </alternativeName>
</protein>
<comment type="function">
    <text evidence="1">ATP-independent molecular chaperone preventing the aggregation of misfolded and hydrophobic patches-containing proteins. Functions as part of a cytosolic protein quality control complex, the BAG6/BAT3 complex, which maintains these client proteins in a soluble state and participates in their proper delivery to the endoplasmic reticulum or alternatively can promote their sorting to the proteasome where they undergo degradation. The BAG6/BAT3 complex is involved in the post-translational delivery of tail-anchored/type II transmembrane proteins to the endoplasmic reticulum membrane. Recruited to ribosomes, it interacts with the transmembrane region of newly synthesized tail-anchored proteins and together with SGTA and ASNA1 mediates their delivery to the endoplasmic reticulum. Client proteins that cannot be properly delivered to the endoplasmic reticulum are ubiquitinated by RNF126, an E3 ubiquitin-protein ligase associated with BAG6 and are sorted to the proteasome. SGTA which prevents the recruitment of RNF126 to BAG6 may negatively regulate the ubiquitination and the proteasomal degradation of client proteins. Similarly, the BAG6/BAT3 complex also functions as a sorting platform for proteins of the secretory pathway that are mislocalized to the cytosol either delivering them to the proteasome for degradation or to the endoplasmic reticulum. The BAG6/BAT3 complex also plays a role in the endoplasmic reticulum-associated degradation (ERAD), a quality control mechanism that eliminates unwanted proteins of the endoplasmic reticulum through their retrotranslocation to the cytosol and their targeting to the proteasome. It maintains these retrotranslocated proteins in an unfolded yet soluble state condition in the cytosol to ensure their proper delivery to the proteasome. BAG6 is also required for selective ubiquitin-mediated degradation of defective nascent chain polypeptides by the proteasome. In this context, it may participate in the production of antigenic peptides and play a role in antigen presentation in immune response. BAG6 is also involved in endoplasmic reticulum stress-induced pre-emptive quality control, a mechanism that selectively attenuates the translocation of newly synthesized proteins into the endoplasmic reticulum and reroutes them to the cytosol for proteasomal degradation. BAG6 may ensure the proper degradation of these proteins and thereby protects the endoplasmic reticulum from protein overload upon stress. By inhibiting the polyubiquitination and subsequent proteasomal degradation of HSPA2 it may also play a role in the assembly of the synaptonemal complex during spermatogenesis. Also positively regulates apoptosis by interacting with and stabilizing the proapoptotic factor AIFM1. By controlling the steady-state expression of the IGF1R receptor, indirectly regulates the insulin-like growth factor receptor signaling pathway.</text>
</comment>
<comment type="function">
    <text evidence="1">Involved in DNA damage-induced apoptosis: following DNA damage, accumulates in the nucleus and forms a complex with p300/EP300, enhancing p300/EP300-mediated p53/TP53 acetylation leading to increase p53/TP53 transcriptional activity. When nuclear, may also act as a component of some chromatin regulator complex that regulates histone 3 'Lys-4' dimethylation (H3K4me2).</text>
</comment>
<comment type="function">
    <text evidence="1">Released extracellularly via exosomes, it is a ligand of the natural killer/NK cells receptor NCR3 and stimulates NK cells cytotoxicity. It may thereby trigger NK cells cytotoxicity against neighboring tumor cells and immature myeloid dendritic cells (DC).</text>
</comment>
<comment type="function">
    <text evidence="1">May mediate ricin-induced apoptosis.</text>
</comment>
<comment type="subunit">
    <text evidence="1 2">Component of the BAG6/BAT3 complex, also named BAT3 complex, at least composed of BAG6, UBL4A and GET4/TRC35. Interacts with GET4; the interaction is direct and localizes BAG6 in the cytosol. Interacts with UBL4A; the interaction is direct and required for UBL4A protein stability. Interacts with AIFM1. Interacts with HSPA2. Interacts with CTCFL. Interacts with p300/EP300. Interacts (via ubiquitin-like domain) with RNF126; required for BAG6-dependent ubiquitination of proteins mislocalized to the cytosol. Interacts (via ubiquitin-like domain) with SGTA; SGTA competes with RNF126 by binding the same region of BAG6, thereby promoting deubiquitination of BAG6-target proteins and rescuing them from degradation. Interacts with ricin A chain. Interacts with VCP and AMFR; both form the VCP/p97-AMFR/gp78 complex. Interacts with SYVN1. Interacts with USP13; the interaction is direct and may mediate UBL4A deubiquitination. Interacts with ZFAND2B. Interacts with KPNA2. Interacts with UBQLN4 (By similarity).</text>
</comment>
<comment type="subcellular location">
    <subcellularLocation>
        <location evidence="1">Cytoplasm</location>
        <location evidence="1">Cytosol</location>
    </subcellularLocation>
    <subcellularLocation>
        <location evidence="1">Nucleus</location>
    </subcellularLocation>
    <subcellularLocation>
        <location evidence="1">Secreted</location>
        <location evidence="1">Extracellular exosome</location>
    </subcellularLocation>
    <text evidence="1">Normally localized in cytosol and nucleus, it can also be released extracellularly, in exosomes, by tumor and myeloid dendritic cells.</text>
</comment>
<comment type="alternative products">
    <event type="alternative splicing"/>
    <isoform>
        <id>Q6MG49-1</id>
        <name>1</name>
        <sequence type="displayed"/>
    </isoform>
    <isoform>
        <id>Q6MG49-2</id>
        <name>2</name>
        <sequence type="described" ref="VSP_040420 VSP_040421"/>
    </isoform>
</comment>
<comment type="domain">
    <text evidence="1">The ubiquitin-like domain mediates interaction with the E3 ubiquitin-protein ligase RNF126 which is responsible for the BAG6-dependent ubiquitination of client proteins. SGTA also binds this domain and competes with RNF126 to antagonize client protein ubiquitination and degradation. The ubiquitin-like domain also mediates the interaction with USP13.</text>
</comment>
<comment type="PTM">
    <text evidence="1">Ricin can induce a cleavage by the caspase CASP3. The released C-terminal peptide induces apoptosis.</text>
</comment>
<dbReference type="EMBL" id="AB018791">
    <property type="protein sequence ID" value="BAA76607.1"/>
    <property type="molecule type" value="mRNA"/>
</dbReference>
<dbReference type="EMBL" id="BX883045">
    <property type="protein sequence ID" value="CAE83997.1"/>
    <property type="molecule type" value="Genomic_DNA"/>
</dbReference>
<dbReference type="EMBL" id="CH474121">
    <property type="protein sequence ID" value="EDL83534.1"/>
    <property type="molecule type" value="Genomic_DNA"/>
</dbReference>
<dbReference type="EMBL" id="BC100141">
    <property type="protein sequence ID" value="AAI00142.1"/>
    <property type="molecule type" value="mRNA"/>
</dbReference>
<dbReference type="RefSeq" id="NP_001029140.1">
    <molecule id="Q6MG49-1"/>
    <property type="nucleotide sequence ID" value="NM_001033968.2"/>
</dbReference>
<dbReference type="RefSeq" id="NP_446061.2">
    <molecule id="Q6MG49-2"/>
    <property type="nucleotide sequence ID" value="NM_053609.3"/>
</dbReference>
<dbReference type="RefSeq" id="XP_063135655.1">
    <molecule id="Q6MG49-1"/>
    <property type="nucleotide sequence ID" value="XM_063279585.1"/>
</dbReference>
<dbReference type="RefSeq" id="XP_063135656.1">
    <molecule id="Q6MG49-1"/>
    <property type="nucleotide sequence ID" value="XM_063279586.1"/>
</dbReference>
<dbReference type="RefSeq" id="XP_063135657.1">
    <molecule id="Q6MG49-1"/>
    <property type="nucleotide sequence ID" value="XM_063279587.1"/>
</dbReference>
<dbReference type="RefSeq" id="XP_063135669.1">
    <molecule id="Q6MG49-2"/>
    <property type="nucleotide sequence ID" value="XM_063279599.1"/>
</dbReference>
<dbReference type="SMR" id="Q6MG49"/>
<dbReference type="BioGRID" id="250197">
    <property type="interactions" value="3"/>
</dbReference>
<dbReference type="FunCoup" id="Q6MG49">
    <property type="interactions" value="3173"/>
</dbReference>
<dbReference type="IntAct" id="Q6MG49">
    <property type="interactions" value="2"/>
</dbReference>
<dbReference type="MINT" id="Q6MG49"/>
<dbReference type="STRING" id="10116.ENSRNOP00000057557"/>
<dbReference type="GlyGen" id="Q6MG49">
    <property type="glycosylation" value="1 site"/>
</dbReference>
<dbReference type="iPTMnet" id="Q6MG49"/>
<dbReference type="PhosphoSitePlus" id="Q6MG49"/>
<dbReference type="jPOST" id="Q6MG49"/>
<dbReference type="PaxDb" id="10116-ENSRNOP00000057557"/>
<dbReference type="GeneID" id="94342"/>
<dbReference type="KEGG" id="rno:94342"/>
<dbReference type="UCSC" id="RGD:71064">
    <molecule id="Q6MG49-1"/>
    <property type="organism name" value="rat"/>
</dbReference>
<dbReference type="AGR" id="RGD:71064"/>
<dbReference type="CTD" id="7917"/>
<dbReference type="RGD" id="71064">
    <property type="gene designation" value="Bag6"/>
</dbReference>
<dbReference type="VEuPathDB" id="HostDB:ENSRNOG00000000851"/>
<dbReference type="eggNOG" id="KOG4248">
    <property type="taxonomic scope" value="Eukaryota"/>
</dbReference>
<dbReference type="HOGENOM" id="CLU_012159_0_0_1"/>
<dbReference type="InParanoid" id="Q6MG49"/>
<dbReference type="OrthoDB" id="1885901at2759"/>
<dbReference type="PhylomeDB" id="Q6MG49"/>
<dbReference type="TreeFam" id="TF328437"/>
<dbReference type="PRO" id="PR:Q6MG49"/>
<dbReference type="Proteomes" id="UP000002494">
    <property type="component" value="Chromosome 20"/>
</dbReference>
<dbReference type="Proteomes" id="UP000234681">
    <property type="component" value="Chromosome 20"/>
</dbReference>
<dbReference type="Bgee" id="ENSRNOG00000000851">
    <property type="expression patterns" value="Expressed in testis and 19 other cell types or tissues"/>
</dbReference>
<dbReference type="ExpressionAtlas" id="Q6MG49">
    <property type="expression patterns" value="baseline and differential"/>
</dbReference>
<dbReference type="GO" id="GO:0071818">
    <property type="term" value="C:BAT3 complex"/>
    <property type="evidence" value="ECO:0000250"/>
    <property type="project" value="UniProtKB"/>
</dbReference>
<dbReference type="GO" id="GO:0005737">
    <property type="term" value="C:cytoplasm"/>
    <property type="evidence" value="ECO:0000266"/>
    <property type="project" value="RGD"/>
</dbReference>
<dbReference type="GO" id="GO:0005829">
    <property type="term" value="C:cytosol"/>
    <property type="evidence" value="ECO:0000250"/>
    <property type="project" value="UniProtKB"/>
</dbReference>
<dbReference type="GO" id="GO:0070062">
    <property type="term" value="C:extracellular exosome"/>
    <property type="evidence" value="ECO:0000266"/>
    <property type="project" value="RGD"/>
</dbReference>
<dbReference type="GO" id="GO:0016020">
    <property type="term" value="C:membrane"/>
    <property type="evidence" value="ECO:0000266"/>
    <property type="project" value="RGD"/>
</dbReference>
<dbReference type="GO" id="GO:0005634">
    <property type="term" value="C:nucleus"/>
    <property type="evidence" value="ECO:0000250"/>
    <property type="project" value="UniProtKB"/>
</dbReference>
<dbReference type="GO" id="GO:0030544">
    <property type="term" value="F:Hsp70 protein binding"/>
    <property type="evidence" value="ECO:0000266"/>
    <property type="project" value="RGD"/>
</dbReference>
<dbReference type="GO" id="GO:0051787">
    <property type="term" value="F:misfolded protein binding"/>
    <property type="evidence" value="ECO:0000266"/>
    <property type="project" value="RGD"/>
</dbReference>
<dbReference type="GO" id="GO:0060090">
    <property type="term" value="F:molecular adaptor activity"/>
    <property type="evidence" value="ECO:0000266"/>
    <property type="project" value="RGD"/>
</dbReference>
<dbReference type="GO" id="GO:0140677">
    <property type="term" value="F:molecular function activator activity"/>
    <property type="evidence" value="ECO:0000266"/>
    <property type="project" value="RGD"/>
</dbReference>
<dbReference type="GO" id="GO:0031593">
    <property type="term" value="F:polyubiquitin modification-dependent protein binding"/>
    <property type="evidence" value="ECO:0000250"/>
    <property type="project" value="UniProtKB"/>
</dbReference>
<dbReference type="GO" id="GO:0070628">
    <property type="term" value="F:proteasome binding"/>
    <property type="evidence" value="ECO:0000250"/>
    <property type="project" value="UniProtKB"/>
</dbReference>
<dbReference type="GO" id="GO:0140597">
    <property type="term" value="F:protein carrier chaperone"/>
    <property type="evidence" value="ECO:0000266"/>
    <property type="project" value="RGD"/>
</dbReference>
<dbReference type="GO" id="GO:0048018">
    <property type="term" value="F:receptor ligand activity"/>
    <property type="evidence" value="ECO:0000266"/>
    <property type="project" value="RGD"/>
</dbReference>
<dbReference type="GO" id="GO:0043022">
    <property type="term" value="F:ribosome binding"/>
    <property type="evidence" value="ECO:0000250"/>
    <property type="project" value="UniProtKB"/>
</dbReference>
<dbReference type="GO" id="GO:0005102">
    <property type="term" value="F:signaling receptor binding"/>
    <property type="evidence" value="ECO:0000266"/>
    <property type="project" value="RGD"/>
</dbReference>
<dbReference type="GO" id="GO:0031625">
    <property type="term" value="F:ubiquitin protein ligase binding"/>
    <property type="evidence" value="ECO:0000266"/>
    <property type="project" value="RGD"/>
</dbReference>
<dbReference type="GO" id="GO:1990381">
    <property type="term" value="F:ubiquitin-specific protease binding"/>
    <property type="evidence" value="ECO:0000266"/>
    <property type="project" value="RGD"/>
</dbReference>
<dbReference type="GO" id="GO:0006915">
    <property type="term" value="P:apoptotic process"/>
    <property type="evidence" value="ECO:0000250"/>
    <property type="project" value="UniProtKB"/>
</dbReference>
<dbReference type="GO" id="GO:0007420">
    <property type="term" value="P:brain development"/>
    <property type="evidence" value="ECO:0000250"/>
    <property type="project" value="UniProtKB"/>
</dbReference>
<dbReference type="GO" id="GO:0030154">
    <property type="term" value="P:cell differentiation"/>
    <property type="evidence" value="ECO:0007669"/>
    <property type="project" value="UniProtKB-KW"/>
</dbReference>
<dbReference type="GO" id="GO:0006325">
    <property type="term" value="P:chromatin organization"/>
    <property type="evidence" value="ECO:0007669"/>
    <property type="project" value="UniProtKB-KW"/>
</dbReference>
<dbReference type="GO" id="GO:0061857">
    <property type="term" value="P:endoplasmic reticulum stress-induced pre-emptive quality control"/>
    <property type="evidence" value="ECO:0000250"/>
    <property type="project" value="UniProtKB"/>
</dbReference>
<dbReference type="GO" id="GO:0036503">
    <property type="term" value="P:ERAD pathway"/>
    <property type="evidence" value="ECO:0000250"/>
    <property type="project" value="UniProtKB"/>
</dbReference>
<dbReference type="GO" id="GO:0002429">
    <property type="term" value="P:immune response-activating cell surface receptor signaling pathway"/>
    <property type="evidence" value="ECO:0000266"/>
    <property type="project" value="RGD"/>
</dbReference>
<dbReference type="GO" id="GO:0018393">
    <property type="term" value="P:internal peptidyl-lysine acetylation"/>
    <property type="evidence" value="ECO:0000250"/>
    <property type="project" value="UniProtKB"/>
</dbReference>
<dbReference type="GO" id="GO:0042771">
    <property type="term" value="P:intrinsic apoptotic signaling pathway in response to DNA damage by p53 class mediator"/>
    <property type="evidence" value="ECO:0000250"/>
    <property type="project" value="UniProtKB"/>
</dbReference>
<dbReference type="GO" id="GO:0070059">
    <property type="term" value="P:intrinsic apoptotic signaling pathway in response to endoplasmic reticulum stress"/>
    <property type="evidence" value="ECO:0000250"/>
    <property type="project" value="UniProtKB"/>
</dbReference>
<dbReference type="GO" id="GO:0001822">
    <property type="term" value="P:kidney development"/>
    <property type="evidence" value="ECO:0000250"/>
    <property type="project" value="UniProtKB"/>
</dbReference>
<dbReference type="GO" id="GO:0030324">
    <property type="term" value="P:lung development"/>
    <property type="evidence" value="ECO:0000250"/>
    <property type="project" value="UniProtKB"/>
</dbReference>
<dbReference type="GO" id="GO:0036506">
    <property type="term" value="P:maintenance of unfolded protein"/>
    <property type="evidence" value="ECO:0000266"/>
    <property type="project" value="RGD"/>
</dbReference>
<dbReference type="GO" id="GO:0030101">
    <property type="term" value="P:natural killer cell activation"/>
    <property type="evidence" value="ECO:0000266"/>
    <property type="project" value="RGD"/>
</dbReference>
<dbReference type="GO" id="GO:0043066">
    <property type="term" value="P:negative regulation of apoptotic process"/>
    <property type="evidence" value="ECO:0000266"/>
    <property type="project" value="RGD"/>
</dbReference>
<dbReference type="GO" id="GO:0032435">
    <property type="term" value="P:negative regulation of proteasomal ubiquitin-dependent protein catabolic process"/>
    <property type="evidence" value="ECO:0000250"/>
    <property type="project" value="UniProtKB"/>
</dbReference>
<dbReference type="GO" id="GO:0045861">
    <property type="term" value="P:negative regulation of proteolysis"/>
    <property type="evidence" value="ECO:0000250"/>
    <property type="project" value="UniProtKB"/>
</dbReference>
<dbReference type="GO" id="GO:0051132">
    <property type="term" value="P:NK T cell activation"/>
    <property type="evidence" value="ECO:0000266"/>
    <property type="project" value="RGD"/>
</dbReference>
<dbReference type="GO" id="GO:1904294">
    <property type="term" value="P:positive regulation of ERAD pathway"/>
    <property type="evidence" value="ECO:0000266"/>
    <property type="project" value="RGD"/>
</dbReference>
<dbReference type="GO" id="GO:0006620">
    <property type="term" value="P:post-translational protein targeting to endoplasmic reticulum membrane"/>
    <property type="evidence" value="ECO:0000266"/>
    <property type="project" value="RGD"/>
</dbReference>
<dbReference type="GO" id="GO:0010498">
    <property type="term" value="P:proteasomal protein catabolic process"/>
    <property type="evidence" value="ECO:0000250"/>
    <property type="project" value="UniProtKB"/>
</dbReference>
<dbReference type="GO" id="GO:0043161">
    <property type="term" value="P:proteasome-mediated ubiquitin-dependent protein catabolic process"/>
    <property type="evidence" value="ECO:0000266"/>
    <property type="project" value="RGD"/>
</dbReference>
<dbReference type="GO" id="GO:0050821">
    <property type="term" value="P:protein stabilization"/>
    <property type="evidence" value="ECO:0000250"/>
    <property type="project" value="UniProtKB"/>
</dbReference>
<dbReference type="GO" id="GO:0042981">
    <property type="term" value="P:regulation of apoptotic process"/>
    <property type="evidence" value="ECO:0000266"/>
    <property type="project" value="RGD"/>
</dbReference>
<dbReference type="GO" id="GO:0042127">
    <property type="term" value="P:regulation of cell population proliferation"/>
    <property type="evidence" value="ECO:0000270"/>
    <property type="project" value="RGD"/>
</dbReference>
<dbReference type="GO" id="GO:0045995">
    <property type="term" value="P:regulation of embryonic development"/>
    <property type="evidence" value="ECO:0000250"/>
    <property type="project" value="UniProtKB"/>
</dbReference>
<dbReference type="GO" id="GO:0031647">
    <property type="term" value="P:regulation of protein stability"/>
    <property type="evidence" value="ECO:0000266"/>
    <property type="project" value="RGD"/>
</dbReference>
<dbReference type="GO" id="GO:0007283">
    <property type="term" value="P:spermatogenesis"/>
    <property type="evidence" value="ECO:0000250"/>
    <property type="project" value="UniProtKB"/>
</dbReference>
<dbReference type="GO" id="GO:0007130">
    <property type="term" value="P:synaptonemal complex assembly"/>
    <property type="evidence" value="ECO:0000250"/>
    <property type="project" value="UniProtKB"/>
</dbReference>
<dbReference type="GO" id="GO:0071816">
    <property type="term" value="P:tail-anchored membrane protein insertion into ER membrane"/>
    <property type="evidence" value="ECO:0000250"/>
    <property type="project" value="UniProtKB"/>
</dbReference>
<dbReference type="GO" id="GO:0006511">
    <property type="term" value="P:ubiquitin-dependent protein catabolic process"/>
    <property type="evidence" value="ECO:0000250"/>
    <property type="project" value="UniProtKB"/>
</dbReference>
<dbReference type="CDD" id="cd01809">
    <property type="entry name" value="Ubl_BAG6"/>
    <property type="match status" value="1"/>
</dbReference>
<dbReference type="FunFam" id="3.10.20.90:FF:000041">
    <property type="entry name" value="large proline-rich protein BAG6 isoform X1"/>
    <property type="match status" value="1"/>
</dbReference>
<dbReference type="Gene3D" id="3.10.20.90">
    <property type="entry name" value="Phosphatidylinositol 3-kinase Catalytic Subunit, Chain A, domain 1"/>
    <property type="match status" value="1"/>
</dbReference>
<dbReference type="InterPro" id="IPR021925">
    <property type="entry name" value="BAG6"/>
</dbReference>
<dbReference type="InterPro" id="IPR048926">
    <property type="entry name" value="Bag6_BAGS"/>
</dbReference>
<dbReference type="InterPro" id="IPR000626">
    <property type="entry name" value="Ubiquitin-like_dom"/>
</dbReference>
<dbReference type="InterPro" id="IPR029071">
    <property type="entry name" value="Ubiquitin-like_domsf"/>
</dbReference>
<dbReference type="InterPro" id="IPR019954">
    <property type="entry name" value="Ubiquitin_CS"/>
</dbReference>
<dbReference type="PANTHER" id="PTHR15204">
    <property type="entry name" value="LARGE PROLINE-RICH PROTEIN BAG6"/>
    <property type="match status" value="1"/>
</dbReference>
<dbReference type="PANTHER" id="PTHR15204:SF0">
    <property type="entry name" value="LARGE PROLINE-RICH PROTEIN BAG6"/>
    <property type="match status" value="1"/>
</dbReference>
<dbReference type="Pfam" id="PF12057">
    <property type="entry name" value="BAG6"/>
    <property type="match status" value="1"/>
</dbReference>
<dbReference type="Pfam" id="PF20960">
    <property type="entry name" value="Bag6_BAGS"/>
    <property type="match status" value="1"/>
</dbReference>
<dbReference type="Pfam" id="PF00240">
    <property type="entry name" value="ubiquitin"/>
    <property type="match status" value="1"/>
</dbReference>
<dbReference type="SMART" id="SM00213">
    <property type="entry name" value="UBQ"/>
    <property type="match status" value="1"/>
</dbReference>
<dbReference type="SUPFAM" id="SSF101447">
    <property type="entry name" value="Formin homology 2 domain (FH2 domain)"/>
    <property type="match status" value="1"/>
</dbReference>
<dbReference type="SUPFAM" id="SSF54236">
    <property type="entry name" value="Ubiquitin-like"/>
    <property type="match status" value="1"/>
</dbReference>
<dbReference type="PROSITE" id="PS00299">
    <property type="entry name" value="UBIQUITIN_1"/>
    <property type="match status" value="1"/>
</dbReference>
<dbReference type="PROSITE" id="PS50053">
    <property type="entry name" value="UBIQUITIN_2"/>
    <property type="match status" value="1"/>
</dbReference>
<reference key="1">
    <citation type="journal article" date="1999" name="DNA Cell Biol.">
        <title>Cloning and characterization of rat BAT3 cDNA.</title>
        <authorList>
            <person name="Ozaki T."/>
            <person name="Hanaoka E."/>
            <person name="Naka M."/>
            <person name="Nakagawara A."/>
            <person name="Sakiyama S."/>
        </authorList>
    </citation>
    <scope>NUCLEOTIDE SEQUENCE [MRNA] (ISOFORM 2)</scope>
</reference>
<reference key="2">
    <citation type="journal article" date="2004" name="Genome Res.">
        <title>The genomic sequence and comparative analysis of the rat major histocompatibility complex.</title>
        <authorList>
            <person name="Hurt P."/>
            <person name="Walter L."/>
            <person name="Sudbrak R."/>
            <person name="Klages S."/>
            <person name="Mueller I."/>
            <person name="Shiina T."/>
            <person name="Inoko H."/>
            <person name="Lehrach H."/>
            <person name="Guenther E."/>
            <person name="Reinhardt R."/>
            <person name="Himmelbauer H."/>
        </authorList>
    </citation>
    <scope>NUCLEOTIDE SEQUENCE [LARGE SCALE GENOMIC DNA]</scope>
    <source>
        <strain>Brown Norway</strain>
    </source>
</reference>
<reference key="3">
    <citation type="submission" date="2005-07" db="EMBL/GenBank/DDBJ databases">
        <authorList>
            <person name="Mural R.J."/>
            <person name="Adams M.D."/>
            <person name="Myers E.W."/>
            <person name="Smith H.O."/>
            <person name="Venter J.C."/>
        </authorList>
    </citation>
    <scope>NUCLEOTIDE SEQUENCE [LARGE SCALE GENOMIC DNA]</scope>
    <source>
        <strain>Brown Norway</strain>
    </source>
</reference>
<reference key="4">
    <citation type="journal article" date="2004" name="Genome Res.">
        <title>The status, quality, and expansion of the NIH full-length cDNA project: the Mammalian Gene Collection (MGC).</title>
        <authorList>
            <consortium name="The MGC Project Team"/>
        </authorList>
    </citation>
    <scope>NUCLEOTIDE SEQUENCE [LARGE SCALE MRNA] (ISOFORM 1)</scope>
    <source>
        <tissue>Brain</tissue>
    </source>
</reference>
<reference key="5">
    <citation type="journal article" date="2012" name="Nat. Commun.">
        <title>Quantitative maps of protein phosphorylation sites across 14 different rat organs and tissues.</title>
        <authorList>
            <person name="Lundby A."/>
            <person name="Secher A."/>
            <person name="Lage K."/>
            <person name="Nordsborg N.B."/>
            <person name="Dmytriyev A."/>
            <person name="Lundby C."/>
            <person name="Olsen J.V."/>
        </authorList>
    </citation>
    <scope>PHOSPHORYLATION [LARGE SCALE ANALYSIS] AT SER-987 AND SER-1095</scope>
    <scope>IDENTIFICATION BY MASS SPECTROMETRY [LARGE SCALE ANALYSIS]</scope>
</reference>
<sequence length="1146" mass="120012">MEPSDSTSTAMEEPDSLEVLVKTLDSQTRTFIVGAQMNVKEFKEHIAASVSIPSEKQRLIYQGRVLQDDKKLQDYNVGGKVIHLVERAPPQTQLPSGASSGTGSASATHGGGPLPGTRGPGASGHDRNANSYVMVGTFNLPSDGSAVDVHINMEQAPIQSEPRVRLVMAQHMIRDIQTLLSRMECRGGTQAQASQPPPQTPTVASETVALNSQTSEPVESEAPPREPMESEEMEERPPTQTPELPPSGPAPAGPAPAPETNAPNHPSPAEHVEVLQELQRLQRRLQPFLQRYCEVLGAAATTDYNNNHEGREEDQRLINLVGESLRLLGNTFVALSDLRCNLACAPPRHLHVVRPMSHYTTPMVLQQAAIPIQINVGTTVTMTGNGARPPPAPGAEAASPGSGQASSLPPSSATVDSSTEGAPPPGPAPPPATSHPRVIRISHQSVEPVVMMHMNIQDSGAQPGGVPSAPTGPLGPPGHGQSLGQQVPGFPTAPTRVVIARPTPPQARPSHPGGPPVSGALQGAGLGTNTSLAQMVSGLVGQLLMQPVLVAQGTPGMAPASASAPATAQAQAPAPAPAPAPAPATASASAGTTNTATTAGPAPGGPAQPPPPQPSAADLQFSQLLGNLLGPAGPGAGGPSLASPTITVAVPGVPAFLQGMTEFLQASQAAPPPPPPPPPPPPAPEQQTTPPPGSPSGGTASPGGLGPESLPPEFFTSVVQGVLSSLLGSLGARAGSSESIAAFIQRLSGSSNIFEPGADGALGFFGALLSLLCQNFSMVDVVMLLHGHFQPLQRLQPQLRSFFHQHYLGGQEPTSSNIRMATHTLITGLEEYVRESFSLVQVQPGVDIIRTNLEFLQEQFNSIAAHVLHCTDSGFGARLLELCNQGLFECLALNLHCLGGQQMELAAVINGRIRRMSRGVNPSLVSWLTTMMGLRLQVVLEHMPVGPDAILRYVRRIGDPPQALPEEPMEVQGAERTSPEPQREDASPAPGTTAEEAMSRGPPPAPEGGSRDEQDGASADAEPWAAAVPPEWVPIIQQDIQSQRKVKPQPPLSDAYLSGMPAKRRKTMQGEGPQLLLSEAVSRAAKAAGARPLTSPESLSRDLEAPEVQESYRQQLRSDIQKRLQEDPNYSPQRFPNAHRAFADDP</sequence>
<gene>
    <name evidence="7" type="primary">Bag6</name>
    <name evidence="5" type="synonym">Bat3</name>
</gene>
<accession>Q6MG49</accession>
<accession>Q498N5</accession>
<accession>Q9WTN8</accession>
<keyword id="KW-0007">Acetylation</keyword>
<keyword id="KW-0025">Alternative splicing</keyword>
<keyword id="KW-0053">Apoptosis</keyword>
<keyword id="KW-0143">Chaperone</keyword>
<keyword id="KW-0156">Chromatin regulator</keyword>
<keyword id="KW-0963">Cytoplasm</keyword>
<keyword id="KW-0221">Differentiation</keyword>
<keyword id="KW-0391">Immunity</keyword>
<keyword id="KW-0539">Nucleus</keyword>
<keyword id="KW-0597">Phosphoprotein</keyword>
<keyword id="KW-1185">Reference proteome</keyword>
<keyword id="KW-0677">Repeat</keyword>
<keyword id="KW-0964">Secreted</keyword>
<keyword id="KW-0744">Spermatogenesis</keyword>
<keyword id="KW-0813">Transport</keyword>
<evidence type="ECO:0000250" key="1">
    <source>
        <dbReference type="UniProtKB" id="P46379"/>
    </source>
</evidence>
<evidence type="ECO:0000250" key="2">
    <source>
        <dbReference type="UniProtKB" id="Q9Z1R2"/>
    </source>
</evidence>
<evidence type="ECO:0000255" key="3">
    <source>
        <dbReference type="PROSITE-ProRule" id="PRU00214"/>
    </source>
</evidence>
<evidence type="ECO:0000256" key="4">
    <source>
        <dbReference type="SAM" id="MobiDB-lite"/>
    </source>
</evidence>
<evidence type="ECO:0000303" key="5">
    <source>
    </source>
</evidence>
<evidence type="ECO:0000305" key="6"/>
<evidence type="ECO:0000312" key="7">
    <source>
        <dbReference type="RGD" id="71064"/>
    </source>
</evidence>
<evidence type="ECO:0007744" key="8">
    <source>
    </source>
</evidence>